<sequence>MALKMVKGSIDRMFDKNLQDLVRGIRNHKEDEAKYISQCIDEIKQELKQDNIAVKANAVCKLTYLQMLGYDISWAAFNIIEVMSASKFTFKRIGYLAASQSFHEGTDVIMLTTNQIRKDLSSPSQYDTGVALTGLSCFVTPDLARDLANDIMTLMSHTKPYIRKKAVLIMYKVFLKYPESLRPAFPRLKEKLEDPDPGVQSAAVNVICELARRNPKNYLSLAPLFFKLMTSSTNNWVLIKIIKLFGALTPLEPRLGKKLIEPLTNLIHSTSAMSLLYECVNTVIAVLISLSSGMPNHSASIQLCVQKLRILIEDSDQNLKYLGLLAMSKILKTHPKSVQSHKDLILQCLDDKDESIRLRALDLLYGMVSKKNLMEIVKKLMTHVDKAEGTTYRDELLTKIIDICSQSNYQYITNFEWYISILVELTRLEGTRHGHLIAAQMLDVAIRVKAIRKFAVSQMSALLDSAHLLASSTQRNGICEVLYAAAWICGEFSEHLQEPHHTLEAMLRPRVTTLPGHIQAVYVQNVVKLYASILQQKEQAGEAEGAQAVTQLMVDRLPQFVQSADLEVQERASCILQLVKHIQKLQAKDVPVAEEVSALFAGELNPVAPKAQKKVPVPEGLDLDAWINEPLSDSESEDERPRAVFHEEEQRRPKHRPSEADEEELARRREARKQEQANNPFYIKSSPSPQKRYQDTPGVEHIPVVQIDLSVPLKVPGLPMSDQYVKLEEERRHRQKLEKDKRRKKRKEKEKKGKRRHSSLPTESDEDIAPAQQVDIVTEEMPENALPSDEDDKDPNDPYRALDIDLDKPLADSEKLPIQKHRNTETSKSPEKDVPMVEKKSKKPKKKEKKHKEKERDKEKKKEKEKKKSPKPKKKKHRKEKEERTKGKKKSKKQPPGSEEAAGEPVQNGAPEEEQLPPESSYSLLAENSYVKMTCDIRGSLQEDSQVTVAIVLENRSSSILKGMELSVLDSLNARMARPQGSSVHDGVPVPFQLPPGVSNEAQYVFTIQSIVMAQKLKGTLSFIAKNDEGATHEKLDFRLHFSCSSYLITTPCYSDAFAKLLESGDLSMSSIKVDGIRMSFQNLLAKICFHHHFSVVERVDSCASMYSRSIQGHHVCLLVKKGENSVSVDGKCSDSTLLSNLLEEMKATLAKC</sequence>
<reference key="1">
    <citation type="journal article" date="1997" name="EMBO J.">
        <title>Altered expression of a novel adaptin leads to defective pigment granule biogenesis in the Drosophila eye color mutant garnet.</title>
        <authorList>
            <person name="Ooi C.E."/>
            <person name="Moreira J.E."/>
            <person name="Dell'Angelica E.C."/>
            <person name="Poy G."/>
            <person name="Wassarman D.A."/>
            <person name="Bonifacino J.S."/>
        </authorList>
    </citation>
    <scope>NUCLEOTIDE SEQUENCE [MRNA] (ISOFORMS 1; 2; 3 AND 4)</scope>
    <source>
        <tissue>Fetal brain</tissue>
    </source>
</reference>
<reference key="2">
    <citation type="journal article" date="1997" name="J. Cell Biol.">
        <title>Characterization of the adaptor-related protein complex, AP-3.</title>
        <authorList>
            <person name="Simpson F."/>
            <person name="Peden A.A."/>
            <person name="Christopoulou L."/>
            <person name="Robinson M.S."/>
        </authorList>
    </citation>
    <scope>NUCLEOTIDE SEQUENCE [MRNA] (ISOFORM 2)</scope>
    <scope>TISSUE SPECIFICITY</scope>
    <source>
        <tissue>Heart</tissue>
    </source>
</reference>
<reference key="3">
    <citation type="submission" date="2005-03" db="EMBL/GenBank/DDBJ databases">
        <authorList>
            <person name="Totoki Y."/>
            <person name="Toyoda A."/>
            <person name="Takeda T."/>
            <person name="Sakaki Y."/>
            <person name="Tanaka A."/>
            <person name="Yokoyama S."/>
            <person name="Ohara O."/>
            <person name="Nagase T."/>
            <person name="Kikuno R.F."/>
        </authorList>
    </citation>
    <scope>NUCLEOTIDE SEQUENCE [LARGE SCALE MRNA] (ISOFORM 5)</scope>
    <source>
        <tissue>Brain</tissue>
    </source>
</reference>
<reference key="4">
    <citation type="journal article" date="2004" name="Nature">
        <title>The DNA sequence and biology of human chromosome 19.</title>
        <authorList>
            <person name="Grimwood J."/>
            <person name="Gordon L.A."/>
            <person name="Olsen A.S."/>
            <person name="Terry A."/>
            <person name="Schmutz J."/>
            <person name="Lamerdin J.E."/>
            <person name="Hellsten U."/>
            <person name="Goodstein D."/>
            <person name="Couronne O."/>
            <person name="Tran-Gyamfi M."/>
            <person name="Aerts A."/>
            <person name="Altherr M."/>
            <person name="Ashworth L."/>
            <person name="Bajorek E."/>
            <person name="Black S."/>
            <person name="Branscomb E."/>
            <person name="Caenepeel S."/>
            <person name="Carrano A.V."/>
            <person name="Caoile C."/>
            <person name="Chan Y.M."/>
            <person name="Christensen M."/>
            <person name="Cleland C.A."/>
            <person name="Copeland A."/>
            <person name="Dalin E."/>
            <person name="Dehal P."/>
            <person name="Denys M."/>
            <person name="Detter J.C."/>
            <person name="Escobar J."/>
            <person name="Flowers D."/>
            <person name="Fotopulos D."/>
            <person name="Garcia C."/>
            <person name="Georgescu A.M."/>
            <person name="Glavina T."/>
            <person name="Gomez M."/>
            <person name="Gonzales E."/>
            <person name="Groza M."/>
            <person name="Hammon N."/>
            <person name="Hawkins T."/>
            <person name="Haydu L."/>
            <person name="Ho I."/>
            <person name="Huang W."/>
            <person name="Israni S."/>
            <person name="Jett J."/>
            <person name="Kadner K."/>
            <person name="Kimball H."/>
            <person name="Kobayashi A."/>
            <person name="Larionov V."/>
            <person name="Leem S.-H."/>
            <person name="Lopez F."/>
            <person name="Lou Y."/>
            <person name="Lowry S."/>
            <person name="Malfatti S."/>
            <person name="Martinez D."/>
            <person name="McCready P.M."/>
            <person name="Medina C."/>
            <person name="Morgan J."/>
            <person name="Nelson K."/>
            <person name="Nolan M."/>
            <person name="Ovcharenko I."/>
            <person name="Pitluck S."/>
            <person name="Pollard M."/>
            <person name="Popkie A.P."/>
            <person name="Predki P."/>
            <person name="Quan G."/>
            <person name="Ramirez L."/>
            <person name="Rash S."/>
            <person name="Retterer J."/>
            <person name="Rodriguez A."/>
            <person name="Rogers S."/>
            <person name="Salamov A."/>
            <person name="Salazar A."/>
            <person name="She X."/>
            <person name="Smith D."/>
            <person name="Slezak T."/>
            <person name="Solovyev V."/>
            <person name="Thayer N."/>
            <person name="Tice H."/>
            <person name="Tsai M."/>
            <person name="Ustaszewska A."/>
            <person name="Vo N."/>
            <person name="Wagner M."/>
            <person name="Wheeler J."/>
            <person name="Wu K."/>
            <person name="Xie G."/>
            <person name="Yang J."/>
            <person name="Dubchak I."/>
            <person name="Furey T.S."/>
            <person name="DeJong P."/>
            <person name="Dickson M."/>
            <person name="Gordon D."/>
            <person name="Eichler E.E."/>
            <person name="Pennacchio L.A."/>
            <person name="Richardson P."/>
            <person name="Stubbs L."/>
            <person name="Rokhsar D.S."/>
            <person name="Myers R.M."/>
            <person name="Rubin E.M."/>
            <person name="Lucas S.M."/>
        </authorList>
    </citation>
    <scope>NUCLEOTIDE SEQUENCE [LARGE SCALE GENOMIC DNA]</scope>
</reference>
<reference key="5">
    <citation type="journal article" date="2004" name="Genome Res.">
        <title>The status, quality, and expansion of the NIH full-length cDNA project: the Mammalian Gene Collection (MGC).</title>
        <authorList>
            <consortium name="The MGC Project Team"/>
        </authorList>
    </citation>
    <scope>NUCLEOTIDE SEQUENCE [LARGE SCALE MRNA] (ISOFORM 1)</scope>
    <source>
        <tissue>Muscle</tissue>
    </source>
</reference>
<reference key="6">
    <citation type="submission" date="1999-02" db="EMBL/GenBank/DDBJ databases">
        <title>Functional prediction of the coding sequences of 75 new genes deduced by analysis of cDNA clones from human fetal liver.</title>
        <authorList>
            <person name="Zhang C."/>
            <person name="Yu Y."/>
            <person name="Zhang S."/>
            <person name="Wei H."/>
            <person name="Bi J."/>
            <person name="Zhou G."/>
            <person name="Dong C."/>
            <person name="Zai Y."/>
            <person name="Xu W."/>
            <person name="Gao F."/>
            <person name="Liu M."/>
            <person name="He F."/>
        </authorList>
    </citation>
    <scope>NUCLEOTIDE SEQUENCE [LARGE SCALE MRNA] OF 74-603 (ISOFORM 1)</scope>
    <source>
        <tissue>Fetal liver</tissue>
    </source>
</reference>
<reference key="7">
    <citation type="journal article" date="2005" name="J. Biol. Chem.">
        <title>AP-1 and AP-3 facilitate lysosomal targeting of Batten disease protein CLN3 via its dileucine motif.</title>
        <authorList>
            <person name="Kyttaelae A."/>
            <person name="Yliannala K."/>
            <person name="Schu P."/>
            <person name="Jalanko A."/>
            <person name="Luzio J.P."/>
        </authorList>
    </citation>
    <scope>INTERACTION WITH CLN3</scope>
</reference>
<reference key="8">
    <citation type="journal article" date="2006" name="Cell">
        <title>Global, in vivo, and site-specific phosphorylation dynamics in signaling networks.</title>
        <authorList>
            <person name="Olsen J.V."/>
            <person name="Blagoev B."/>
            <person name="Gnad F."/>
            <person name="Macek B."/>
            <person name="Kumar C."/>
            <person name="Mortensen P."/>
            <person name="Mann M."/>
        </authorList>
    </citation>
    <scope>PHOSPHORYLATION [LARGE SCALE ANALYSIS] AT SER-632; SER-634; SER-636 AND SER-658</scope>
    <scope>IDENTIFICATION BY MASS SPECTROMETRY [LARGE SCALE ANALYSIS]</scope>
    <source>
        <tissue>Cervix carcinoma</tissue>
    </source>
</reference>
<reference key="9">
    <citation type="journal article" date="2008" name="J. Proteome Res.">
        <title>Phosphoproteome of resting human platelets.</title>
        <authorList>
            <person name="Zahedi R.P."/>
            <person name="Lewandrowski U."/>
            <person name="Wiesner J."/>
            <person name="Wortelkamp S."/>
            <person name="Moebius J."/>
            <person name="Schuetz C."/>
            <person name="Walter U."/>
            <person name="Gambaryan S."/>
            <person name="Sickmann A."/>
        </authorList>
    </citation>
    <scope>IDENTIFICATION BY MASS SPECTROMETRY [LARGE SCALE ANALYSIS]</scope>
    <source>
        <tissue>Platelet</tissue>
    </source>
</reference>
<reference key="10">
    <citation type="journal article" date="2008" name="Proc. Natl. Acad. Sci. U.S.A.">
        <title>A quantitative atlas of mitotic phosphorylation.</title>
        <authorList>
            <person name="Dephoure N."/>
            <person name="Zhou C."/>
            <person name="Villen J."/>
            <person name="Beausoleil S.A."/>
            <person name="Bakalarski C.E."/>
            <person name="Elledge S.J."/>
            <person name="Gygi S.P."/>
        </authorList>
    </citation>
    <scope>PHOSPHORYLATION [LARGE SCALE ANALYSIS] AT SER-688; SER-758; SER-759; THR-762; SER-764 AND SER-788</scope>
    <scope>PHOSPHORYLATION [LARGE SCALE ANALYSIS] AT SER-828 (ISOFORM 2)</scope>
    <scope>PHOSPHORYLATION [LARGE SCALE ANALYSIS] AT SER-931 (ISOFORM 5)</scope>
    <scope>IDENTIFICATION BY MASS SPECTROMETRY [LARGE SCALE ANALYSIS]</scope>
    <source>
        <tissue>Cervix carcinoma</tissue>
    </source>
</reference>
<reference key="11">
    <citation type="journal article" date="2010" name="Sci. Signal.">
        <title>Quantitative phosphoproteomics reveals widespread full phosphorylation site occupancy during mitosis.</title>
        <authorList>
            <person name="Olsen J.V."/>
            <person name="Vermeulen M."/>
            <person name="Santamaria A."/>
            <person name="Kumar C."/>
            <person name="Miller M.L."/>
            <person name="Jensen L.J."/>
            <person name="Gnad F."/>
            <person name="Cox J."/>
            <person name="Jensen T.S."/>
            <person name="Nigg E.A."/>
            <person name="Brunak S."/>
            <person name="Mann M."/>
        </authorList>
    </citation>
    <scope>PHOSPHORYLATION [LARGE SCALE ANALYSIS] AT SER-632; SER-634; SER-636; SER-788 AND SER-829</scope>
    <scope>IDENTIFICATION BY MASS SPECTROMETRY [LARGE SCALE ANALYSIS]</scope>
    <source>
        <tissue>Cervix carcinoma</tissue>
    </source>
</reference>
<reference key="12">
    <citation type="journal article" date="2011" name="BMC Syst. Biol.">
        <title>Initial characterization of the human central proteome.</title>
        <authorList>
            <person name="Burkard T.R."/>
            <person name="Planyavsky M."/>
            <person name="Kaupe I."/>
            <person name="Breitwieser F.P."/>
            <person name="Buerckstuemmer T."/>
            <person name="Bennett K.L."/>
            <person name="Superti-Furga G."/>
            <person name="Colinge J."/>
        </authorList>
    </citation>
    <scope>IDENTIFICATION BY MASS SPECTROMETRY [LARGE SCALE ANALYSIS]</scope>
</reference>
<reference key="13">
    <citation type="journal article" date="2011" name="Sci. Signal.">
        <title>System-wide temporal characterization of the proteome and phosphoproteome of human embryonic stem cell differentiation.</title>
        <authorList>
            <person name="Rigbolt K.T."/>
            <person name="Prokhorova T.A."/>
            <person name="Akimov V."/>
            <person name="Henningsen J."/>
            <person name="Johansen P.T."/>
            <person name="Kratchmarova I."/>
            <person name="Kassem M."/>
            <person name="Mann M."/>
            <person name="Olsen J.V."/>
            <person name="Blagoev B."/>
        </authorList>
    </citation>
    <scope>PHOSPHORYLATION [LARGE SCALE ANALYSIS] AT SER-632 AND SER-658</scope>
    <scope>IDENTIFICATION BY MASS SPECTROMETRY [LARGE SCALE ANALYSIS]</scope>
</reference>
<reference key="14">
    <citation type="journal article" date="2012" name="Proc. Natl. Acad. Sci. U.S.A.">
        <title>N-terminal acetylome analyses and functional insights of the N-terminal acetyltransferase NatB.</title>
        <authorList>
            <person name="Van Damme P."/>
            <person name="Lasa M."/>
            <person name="Polevoda B."/>
            <person name="Gazquez C."/>
            <person name="Elosegui-Artola A."/>
            <person name="Kim D.S."/>
            <person name="De Juan-Pardo E."/>
            <person name="Demeyer K."/>
            <person name="Hole K."/>
            <person name="Larrea E."/>
            <person name="Timmerman E."/>
            <person name="Prieto J."/>
            <person name="Arnesen T."/>
            <person name="Sherman F."/>
            <person name="Gevaert K."/>
            <person name="Aldabe R."/>
        </authorList>
    </citation>
    <scope>ACETYLATION [LARGE SCALE ANALYSIS] AT ALA-2</scope>
    <scope>CLEAVAGE OF INITIATOR METHIONINE [LARGE SCALE ANALYSIS]</scope>
    <scope>IDENTIFICATION BY MASS SPECTROMETRY [LARGE SCALE ANALYSIS]</scope>
</reference>
<reference key="15">
    <citation type="journal article" date="2013" name="J. Proteome Res.">
        <title>Toward a comprehensive characterization of a human cancer cell phosphoproteome.</title>
        <authorList>
            <person name="Zhou H."/>
            <person name="Di Palma S."/>
            <person name="Preisinger C."/>
            <person name="Peng M."/>
            <person name="Polat A.N."/>
            <person name="Heck A.J."/>
            <person name="Mohammed S."/>
        </authorList>
    </citation>
    <scope>PHOSPHORYLATION [LARGE SCALE ANALYSIS] AT SER-658 AND SER-829</scope>
    <scope>IDENTIFICATION BY MASS SPECTROMETRY [LARGE SCALE ANALYSIS]</scope>
    <source>
        <tissue>Cervix carcinoma</tissue>
        <tissue>Erythroleukemia</tissue>
    </source>
</reference>
<reference key="16">
    <citation type="journal article" date="2014" name="J. Proteomics">
        <title>An enzyme assisted RP-RPLC approach for in-depth analysis of human liver phosphoproteome.</title>
        <authorList>
            <person name="Bian Y."/>
            <person name="Song C."/>
            <person name="Cheng K."/>
            <person name="Dong M."/>
            <person name="Wang F."/>
            <person name="Huang J."/>
            <person name="Sun D."/>
            <person name="Wang L."/>
            <person name="Ye M."/>
            <person name="Zou H."/>
        </authorList>
    </citation>
    <scope>PHOSPHORYLATION [LARGE SCALE ANALYSIS] AT SER-632; SER-634; SER-636 AND SER-788</scope>
    <scope>PHOSPHORYLATION [LARGE SCALE ANALYSIS] AT SER-785 (ISOFORM 2)</scope>
    <scope>IDENTIFICATION BY MASS SPECTROMETRY [LARGE SCALE ANALYSIS]</scope>
    <source>
        <tissue>Liver</tissue>
    </source>
</reference>
<reference key="17">
    <citation type="journal article" date="2015" name="J. Cell. Physiol.">
        <title>TNFalpha post-translationally targets ZnT2 to accumulate zinc in lysosomes.</title>
        <authorList>
            <person name="Hennigar S.R."/>
            <person name="Kelleher S.L."/>
        </authorList>
    </citation>
    <scope>INTERACTION WITH SLC30A2</scope>
</reference>
<reference key="18">
    <citation type="journal article" date="2016" name="Blood">
        <title>Mutations in AP3D1 associated with immunodeficiency and seizures define a new type of Hermansky-Pudlak syndrome.</title>
        <authorList>
            <person name="Ammann S."/>
            <person name="Schulz A."/>
            <person name="Kraegeloh-Mann I."/>
            <person name="Dieckmann N.M."/>
            <person name="Niethammer K."/>
            <person name="Fuchs S."/>
            <person name="Eckl K.M."/>
            <person name="Plank R."/>
            <person name="Werner R."/>
            <person name="Altmueller J."/>
            <person name="Thiele H."/>
            <person name="Nuernberg P."/>
            <person name="Bank J."/>
            <person name="Strauss A."/>
            <person name="von Bernuth H."/>
            <person name="Zur Stadt U."/>
            <person name="Grieve S."/>
            <person name="Griffiths G.M."/>
            <person name="Lehmberg K."/>
            <person name="Hennies H.C."/>
            <person name="Ehl S."/>
        </authorList>
    </citation>
    <scope>FUNCTION</scope>
    <scope>INVOLVEMENT IN HPS10</scope>
</reference>
<proteinExistence type="evidence at protein level"/>
<dbReference type="EMBL" id="AF002163">
    <property type="protein sequence ID" value="AAC51761.1"/>
    <property type="molecule type" value="mRNA"/>
</dbReference>
<dbReference type="EMBL" id="U91930">
    <property type="protein sequence ID" value="AAD03777.1"/>
    <property type="molecule type" value="mRNA"/>
</dbReference>
<dbReference type="EMBL" id="AB208804">
    <property type="protein sequence ID" value="BAD92041.1"/>
    <property type="status" value="ALT_INIT"/>
    <property type="molecule type" value="mRNA"/>
</dbReference>
<dbReference type="EMBL" id="AC005545">
    <property type="protein sequence ID" value="AAC34212.1"/>
    <property type="molecule type" value="Genomic_DNA"/>
</dbReference>
<dbReference type="EMBL" id="AC005545">
    <property type="protein sequence ID" value="AAC34214.1"/>
    <property type="molecule type" value="Genomic_DNA"/>
</dbReference>
<dbReference type="EMBL" id="BC010065">
    <property type="protein sequence ID" value="AAH10065.1"/>
    <property type="status" value="ALT_SEQ"/>
    <property type="molecule type" value="mRNA"/>
</dbReference>
<dbReference type="EMBL" id="AF130042">
    <property type="protein sequence ID" value="AAG35473.1"/>
    <property type="status" value="ALT_SEQ"/>
    <property type="molecule type" value="mRNA"/>
</dbReference>
<dbReference type="CCDS" id="CCDS42459.1">
    <molecule id="O14617-1"/>
</dbReference>
<dbReference type="CCDS" id="CCDS58638.1">
    <molecule id="O14617-5"/>
</dbReference>
<dbReference type="RefSeq" id="NP_001248755.1">
    <molecule id="O14617-5"/>
    <property type="nucleotide sequence ID" value="NM_001261826.3"/>
</dbReference>
<dbReference type="RefSeq" id="NP_003929.4">
    <molecule id="O14617-1"/>
    <property type="nucleotide sequence ID" value="NM_003938.6"/>
</dbReference>
<dbReference type="PDB" id="4AFI">
    <property type="method" value="X-ray"/>
    <property type="resolution" value="2.80 A"/>
    <property type="chains" value="A/B=680-729"/>
</dbReference>
<dbReference type="PDB" id="9C58">
    <property type="method" value="EM"/>
    <property type="resolution" value="4.70 A"/>
    <property type="chains" value="D=1-617"/>
</dbReference>
<dbReference type="PDB" id="9C59">
    <property type="method" value="EM"/>
    <property type="resolution" value="4.30 A"/>
    <property type="chains" value="D/d=1-617"/>
</dbReference>
<dbReference type="PDB" id="9C5B">
    <property type="method" value="EM"/>
    <property type="resolution" value="4.50 A"/>
    <property type="chains" value="D=1-617"/>
</dbReference>
<dbReference type="PDB" id="9C5C">
    <property type="method" value="EM"/>
    <property type="resolution" value="3.60 A"/>
    <property type="chains" value="D=18-605"/>
</dbReference>
<dbReference type="PDBsum" id="4AFI"/>
<dbReference type="PDBsum" id="9C58"/>
<dbReference type="PDBsum" id="9C59"/>
<dbReference type="PDBsum" id="9C5B"/>
<dbReference type="PDBsum" id="9C5C"/>
<dbReference type="EMDB" id="EMD-45207"/>
<dbReference type="EMDB" id="EMD-45208"/>
<dbReference type="EMDB" id="EMD-45210"/>
<dbReference type="EMDB" id="EMD-45211"/>
<dbReference type="EMDB" id="EMD-45212"/>
<dbReference type="EMDB" id="EMD-45213"/>
<dbReference type="EMDB" id="EMD-45214"/>
<dbReference type="SMR" id="O14617"/>
<dbReference type="BioGRID" id="114455">
    <property type="interactions" value="173"/>
</dbReference>
<dbReference type="ComplexPortal" id="CPX-5051">
    <property type="entry name" value="Ubiquitous AP-3 Adaptor complex, sigma3a variant"/>
</dbReference>
<dbReference type="ComplexPortal" id="CPX-5052">
    <property type="entry name" value="Ubiquitous AP-3 Adaptor complex, sigma3b variant"/>
</dbReference>
<dbReference type="ComplexPortal" id="CPX-5053">
    <property type="entry name" value="Neuronal AP-3 Adaptor complex, sigma3b variant"/>
</dbReference>
<dbReference type="ComplexPortal" id="CPX-5055">
    <property type="entry name" value="Neuronal AP-3 Adaptor complex, sigma3a variant"/>
</dbReference>
<dbReference type="CORUM" id="O14617"/>
<dbReference type="DIP" id="DIP-46793N"/>
<dbReference type="FunCoup" id="O14617">
    <property type="interactions" value="2787"/>
</dbReference>
<dbReference type="IntAct" id="O14617">
    <property type="interactions" value="83"/>
</dbReference>
<dbReference type="MINT" id="O14617"/>
<dbReference type="STRING" id="9606.ENSP00000495274"/>
<dbReference type="GlyGen" id="O14617">
    <property type="glycosylation" value="1 site, 1 O-linked glycan (1 site)"/>
</dbReference>
<dbReference type="iPTMnet" id="O14617"/>
<dbReference type="MetOSite" id="O14617"/>
<dbReference type="PhosphoSitePlus" id="O14617"/>
<dbReference type="SwissPalm" id="O14617"/>
<dbReference type="BioMuta" id="AP3D1"/>
<dbReference type="jPOST" id="O14617"/>
<dbReference type="MassIVE" id="O14617"/>
<dbReference type="PaxDb" id="9606-ENSP00000347416"/>
<dbReference type="PeptideAtlas" id="O14617"/>
<dbReference type="ProteomicsDB" id="48117">
    <molecule id="O14617-1"/>
</dbReference>
<dbReference type="ProteomicsDB" id="48118">
    <molecule id="O14617-2"/>
</dbReference>
<dbReference type="ProteomicsDB" id="48119">
    <molecule id="O14617-3"/>
</dbReference>
<dbReference type="ProteomicsDB" id="48120">
    <molecule id="O14617-4"/>
</dbReference>
<dbReference type="ProteomicsDB" id="48121">
    <molecule id="O14617-5"/>
</dbReference>
<dbReference type="Pumba" id="O14617"/>
<dbReference type="Antibodypedia" id="22913">
    <property type="antibodies" value="97 antibodies from 28 providers"/>
</dbReference>
<dbReference type="DNASU" id="8943"/>
<dbReference type="Ensembl" id="ENST00000345016.9">
    <molecule id="O14617-1"/>
    <property type="protein sequence ID" value="ENSP00000344055.4"/>
    <property type="gene ID" value="ENSG00000065000.20"/>
</dbReference>
<dbReference type="Ensembl" id="ENST00000643116.3">
    <molecule id="O14617-5"/>
    <property type="protein sequence ID" value="ENSP00000495274.2"/>
    <property type="gene ID" value="ENSG00000065000.20"/>
</dbReference>
<dbReference type="GeneID" id="8943"/>
<dbReference type="KEGG" id="hsa:8943"/>
<dbReference type="MANE-Select" id="ENST00000643116.3">
    <molecule id="O14617-5"/>
    <property type="protein sequence ID" value="ENSP00000495274.2"/>
    <property type="RefSeq nucleotide sequence ID" value="NM_001261826.3"/>
    <property type="RefSeq protein sequence ID" value="NP_001248755.1"/>
</dbReference>
<dbReference type="UCSC" id="uc002luz.4">
    <molecule id="O14617-1"/>
    <property type="organism name" value="human"/>
</dbReference>
<dbReference type="AGR" id="HGNC:568"/>
<dbReference type="CTD" id="8943"/>
<dbReference type="DisGeNET" id="8943"/>
<dbReference type="GeneCards" id="AP3D1"/>
<dbReference type="GeneReviews" id="AP3D1"/>
<dbReference type="HGNC" id="HGNC:568">
    <property type="gene designation" value="AP3D1"/>
</dbReference>
<dbReference type="HPA" id="ENSG00000065000">
    <property type="expression patterns" value="Low tissue specificity"/>
</dbReference>
<dbReference type="MalaCards" id="AP3D1"/>
<dbReference type="MIM" id="607246">
    <property type="type" value="gene"/>
</dbReference>
<dbReference type="MIM" id="617050">
    <property type="type" value="phenotype"/>
</dbReference>
<dbReference type="neXtProt" id="NX_O14617"/>
<dbReference type="OpenTargets" id="ENSG00000065000"/>
<dbReference type="Orphanet" id="664511">
    <property type="disease" value="Early-onset severe Hermansky-Pudlak syndrome with hearing loss, due to AP3D1 deficiency"/>
</dbReference>
<dbReference type="Orphanet" id="1000">
    <property type="disease" value="Ocular albinism with late-onset sensorineural deafness"/>
</dbReference>
<dbReference type="Orphanet" id="54">
    <property type="disease" value="X-linked recessive ocular albinism"/>
</dbReference>
<dbReference type="PharmGKB" id="PA24859"/>
<dbReference type="VEuPathDB" id="HostDB:ENSG00000065000"/>
<dbReference type="eggNOG" id="KOG1059">
    <property type="taxonomic scope" value="Eukaryota"/>
</dbReference>
<dbReference type="GeneTree" id="ENSGT00550000075067"/>
<dbReference type="HOGENOM" id="CLU_001908_0_0_1"/>
<dbReference type="InParanoid" id="O14617"/>
<dbReference type="OMA" id="ICITNIG"/>
<dbReference type="OrthoDB" id="10264595at2759"/>
<dbReference type="PAN-GO" id="O14617">
    <property type="GO annotations" value="10 GO annotations based on evolutionary models"/>
</dbReference>
<dbReference type="PhylomeDB" id="O14617"/>
<dbReference type="TreeFam" id="TF105666"/>
<dbReference type="PathwayCommons" id="O14617"/>
<dbReference type="SignaLink" id="O14617"/>
<dbReference type="SIGNOR" id="O14617"/>
<dbReference type="BioGRID-ORCS" id="8943">
    <property type="hits" value="29 hits in 1159 CRISPR screens"/>
</dbReference>
<dbReference type="CD-CODE" id="91857CE7">
    <property type="entry name" value="Nucleolus"/>
</dbReference>
<dbReference type="CD-CODE" id="FB4E32DD">
    <property type="entry name" value="Presynaptic clusters and postsynaptic densities"/>
</dbReference>
<dbReference type="ChiTaRS" id="AP3D1">
    <property type="organism name" value="human"/>
</dbReference>
<dbReference type="GeneWiki" id="AP3D1"/>
<dbReference type="GenomeRNAi" id="8943"/>
<dbReference type="Pharos" id="O14617">
    <property type="development level" value="Tbio"/>
</dbReference>
<dbReference type="PRO" id="PR:O14617"/>
<dbReference type="Proteomes" id="UP000005640">
    <property type="component" value="Chromosome 19"/>
</dbReference>
<dbReference type="RNAct" id="O14617">
    <property type="molecule type" value="protein"/>
</dbReference>
<dbReference type="Bgee" id="ENSG00000065000">
    <property type="expression patterns" value="Expressed in tendon of biceps brachii and 208 other cell types or tissues"/>
</dbReference>
<dbReference type="ExpressionAtlas" id="O14617">
    <property type="expression patterns" value="baseline and differential"/>
</dbReference>
<dbReference type="GO" id="GO:0030123">
    <property type="term" value="C:AP-3 adaptor complex"/>
    <property type="evidence" value="ECO:0000318"/>
    <property type="project" value="GO_Central"/>
</dbReference>
<dbReference type="GO" id="GO:1904115">
    <property type="term" value="C:axon cytoplasm"/>
    <property type="evidence" value="ECO:0007669"/>
    <property type="project" value="GOC"/>
</dbReference>
<dbReference type="GO" id="GO:0005769">
    <property type="term" value="C:early endosome"/>
    <property type="evidence" value="ECO:0000303"/>
    <property type="project" value="ComplexPortal"/>
</dbReference>
<dbReference type="GO" id="GO:0010008">
    <property type="term" value="C:endosome membrane"/>
    <property type="evidence" value="ECO:0000314"/>
    <property type="project" value="UniProtKB"/>
</dbReference>
<dbReference type="GO" id="GO:0098978">
    <property type="term" value="C:glutamatergic synapse"/>
    <property type="evidence" value="ECO:0007669"/>
    <property type="project" value="Ensembl"/>
</dbReference>
<dbReference type="GO" id="GO:0005794">
    <property type="term" value="C:Golgi apparatus"/>
    <property type="evidence" value="ECO:0000304"/>
    <property type="project" value="ProtInc"/>
</dbReference>
<dbReference type="GO" id="GO:0000139">
    <property type="term" value="C:Golgi membrane"/>
    <property type="evidence" value="ECO:0007669"/>
    <property type="project" value="UniProtKB-SubCell"/>
</dbReference>
<dbReference type="GO" id="GO:0005765">
    <property type="term" value="C:lysosomal membrane"/>
    <property type="evidence" value="ECO:0007005"/>
    <property type="project" value="UniProtKB"/>
</dbReference>
<dbReference type="GO" id="GO:0016020">
    <property type="term" value="C:membrane"/>
    <property type="evidence" value="ECO:0007005"/>
    <property type="project" value="UniProtKB"/>
</dbReference>
<dbReference type="GO" id="GO:0098794">
    <property type="term" value="C:postsynapse"/>
    <property type="evidence" value="ECO:0007669"/>
    <property type="project" value="Ensembl"/>
</dbReference>
<dbReference type="GO" id="GO:0098830">
    <property type="term" value="C:presynaptic endosome"/>
    <property type="evidence" value="ECO:0000318"/>
    <property type="project" value="GO_Central"/>
</dbReference>
<dbReference type="GO" id="GO:0043195">
    <property type="term" value="C:terminal bouton"/>
    <property type="evidence" value="ECO:0000318"/>
    <property type="project" value="GO_Central"/>
</dbReference>
<dbReference type="GO" id="GO:0008089">
    <property type="term" value="P:anterograde axonal transport"/>
    <property type="evidence" value="ECO:0000250"/>
    <property type="project" value="UniProtKB"/>
</dbReference>
<dbReference type="GO" id="GO:0048490">
    <property type="term" value="P:anterograde synaptic vesicle transport"/>
    <property type="evidence" value="ECO:0000250"/>
    <property type="project" value="UniProtKB"/>
</dbReference>
<dbReference type="GO" id="GO:0048007">
    <property type="term" value="P:antigen processing and presentation, exogenous lipid antigen via MHC class Ib"/>
    <property type="evidence" value="ECO:0007669"/>
    <property type="project" value="Ensembl"/>
</dbReference>
<dbReference type="GO" id="GO:0035654">
    <property type="term" value="P:clathrin-coated vesicle cargo loading, AP-3-mediated"/>
    <property type="evidence" value="ECO:0000303"/>
    <property type="project" value="ComplexPortal"/>
</dbReference>
<dbReference type="GO" id="GO:0035646">
    <property type="term" value="P:endosome to melanosome transport"/>
    <property type="evidence" value="ECO:0000315"/>
    <property type="project" value="ParkinsonsUK-UCL"/>
</dbReference>
<dbReference type="GO" id="GO:0006896">
    <property type="term" value="P:Golgi to vacuole transport"/>
    <property type="evidence" value="ECO:0000318"/>
    <property type="project" value="GO_Central"/>
</dbReference>
<dbReference type="GO" id="GO:0006886">
    <property type="term" value="P:intracellular protein transport"/>
    <property type="evidence" value="ECO:0000304"/>
    <property type="project" value="ProtInc"/>
</dbReference>
<dbReference type="GO" id="GO:0046907">
    <property type="term" value="P:intracellular transport"/>
    <property type="evidence" value="ECO:0000303"/>
    <property type="project" value="ComplexPortal"/>
</dbReference>
<dbReference type="GO" id="GO:1903232">
    <property type="term" value="P:melanosome assembly"/>
    <property type="evidence" value="ECO:0000303"/>
    <property type="project" value="ComplexPortal"/>
</dbReference>
<dbReference type="GO" id="GO:0032438">
    <property type="term" value="P:melanosome organization"/>
    <property type="evidence" value="ECO:0000305"/>
    <property type="project" value="ParkinsonsUK-UCL"/>
</dbReference>
<dbReference type="GO" id="GO:0098943">
    <property type="term" value="P:neurotransmitter receptor transport, postsynaptic endosome to lysosome"/>
    <property type="evidence" value="ECO:0000318"/>
    <property type="project" value="GO_Central"/>
</dbReference>
<dbReference type="GO" id="GO:0060155">
    <property type="term" value="P:platelet dense granule organization"/>
    <property type="evidence" value="ECO:0000303"/>
    <property type="project" value="ComplexPortal"/>
</dbReference>
<dbReference type="GO" id="GO:0051138">
    <property type="term" value="P:positive regulation of NK T cell differentiation"/>
    <property type="evidence" value="ECO:0007669"/>
    <property type="project" value="Ensembl"/>
</dbReference>
<dbReference type="GO" id="GO:0045944">
    <property type="term" value="P:positive regulation of transcription by RNA polymerase II"/>
    <property type="evidence" value="ECO:0007669"/>
    <property type="project" value="Ensembl"/>
</dbReference>
<dbReference type="GO" id="GO:0072657">
    <property type="term" value="P:protein localization to membrane"/>
    <property type="evidence" value="ECO:0000315"/>
    <property type="project" value="ParkinsonsUK-UCL"/>
</dbReference>
<dbReference type="GO" id="GO:0006623">
    <property type="term" value="P:protein targeting to vacuole"/>
    <property type="evidence" value="ECO:0000318"/>
    <property type="project" value="GO_Central"/>
</dbReference>
<dbReference type="GO" id="GO:0016182">
    <property type="term" value="P:synaptic vesicle budding from endosome"/>
    <property type="evidence" value="ECO:0000318"/>
    <property type="project" value="GO_Central"/>
</dbReference>
<dbReference type="GO" id="GO:0016183">
    <property type="term" value="P:synaptic vesicle coating"/>
    <property type="evidence" value="ECO:0000303"/>
    <property type="project" value="ComplexPortal"/>
</dbReference>
<dbReference type="GO" id="GO:0048499">
    <property type="term" value="P:synaptic vesicle membrane organization"/>
    <property type="evidence" value="ECO:0000318"/>
    <property type="project" value="GO_Central"/>
</dbReference>
<dbReference type="GO" id="GO:0036465">
    <property type="term" value="P:synaptic vesicle recycling"/>
    <property type="evidence" value="ECO:0000303"/>
    <property type="project" value="ComplexPortal"/>
</dbReference>
<dbReference type="GO" id="GO:0016192">
    <property type="term" value="P:vesicle-mediated transport"/>
    <property type="evidence" value="ECO:0000303"/>
    <property type="project" value="ComplexPortal"/>
</dbReference>
<dbReference type="GO" id="GO:0140916">
    <property type="term" value="P:zinc ion import into lysosome"/>
    <property type="evidence" value="ECO:0000315"/>
    <property type="project" value="BHF-UCL"/>
</dbReference>
<dbReference type="FunFam" id="1.25.10.10:FF:000785">
    <property type="entry name" value="Adaptor related protein complex 3 subunit delta 1"/>
    <property type="match status" value="1"/>
</dbReference>
<dbReference type="FunFam" id="1.25.10.10:FF:000808">
    <property type="entry name" value="Adaptor related protein complex 3 subunit delta 1"/>
    <property type="match status" value="1"/>
</dbReference>
<dbReference type="FunFam" id="3.30.450.50:FF:000001">
    <property type="entry name" value="AP-3 complex subunit delta-1, putative"/>
    <property type="match status" value="1"/>
</dbReference>
<dbReference type="Gene3D" id="1.25.10.10">
    <property type="entry name" value="Leucine-rich Repeat Variant"/>
    <property type="match status" value="1"/>
</dbReference>
<dbReference type="Gene3D" id="3.30.450.50">
    <property type="entry name" value="Longin domain"/>
    <property type="match status" value="1"/>
</dbReference>
<dbReference type="InterPro" id="IPR017105">
    <property type="entry name" value="AP3_complex_dsu"/>
</dbReference>
<dbReference type="InterPro" id="IPR010474">
    <property type="entry name" value="AP3D_dom_metazoa"/>
</dbReference>
<dbReference type="InterPro" id="IPR011989">
    <property type="entry name" value="ARM-like"/>
</dbReference>
<dbReference type="InterPro" id="IPR016024">
    <property type="entry name" value="ARM-type_fold"/>
</dbReference>
<dbReference type="InterPro" id="IPR002553">
    <property type="entry name" value="Clathrin/coatomer_adapt-like_N"/>
</dbReference>
<dbReference type="PANTHER" id="PTHR22781:SF12">
    <property type="entry name" value="AP-3 COMPLEX SUBUNIT DELTA-1"/>
    <property type="match status" value="1"/>
</dbReference>
<dbReference type="PANTHER" id="PTHR22781">
    <property type="entry name" value="DELTA ADAPTIN-RELATED"/>
    <property type="match status" value="1"/>
</dbReference>
<dbReference type="Pfam" id="PF01602">
    <property type="entry name" value="Adaptin_N"/>
    <property type="match status" value="1"/>
</dbReference>
<dbReference type="Pfam" id="PF06375">
    <property type="entry name" value="AP3D1"/>
    <property type="match status" value="1"/>
</dbReference>
<dbReference type="SMART" id="SM01354">
    <property type="entry name" value="BLVR"/>
    <property type="match status" value="1"/>
</dbReference>
<dbReference type="SUPFAM" id="SSF48371">
    <property type="entry name" value="ARM repeat"/>
    <property type="match status" value="1"/>
</dbReference>
<feature type="initiator methionine" description="Removed" evidence="18">
    <location>
        <position position="1"/>
    </location>
</feature>
<feature type="chain" id="PRO_0000193766" description="AP-3 complex subunit delta-1">
    <location>
        <begin position="2"/>
        <end position="1153"/>
    </location>
</feature>
<feature type="repeat" description="HEAT 1">
    <location>
        <begin position="34"/>
        <end position="71"/>
    </location>
</feature>
<feature type="repeat" description="HEAT 2">
    <location>
        <begin position="77"/>
        <end position="114"/>
    </location>
</feature>
<feature type="repeat" description="HEAT 3">
    <location>
        <begin position="142"/>
        <end position="179"/>
    </location>
</feature>
<feature type="repeat" description="HEAT 4">
    <location>
        <begin position="180"/>
        <end position="216"/>
    </location>
</feature>
<feature type="repeat" description="HEAT 5">
    <location>
        <begin position="254"/>
        <end position="292"/>
    </location>
</feature>
<feature type="repeat" description="HEAT 6">
    <location>
        <begin position="299"/>
        <end position="336"/>
    </location>
</feature>
<feature type="repeat" description="HEAT 7">
    <location>
        <begin position="338"/>
        <end position="373"/>
    </location>
</feature>
<feature type="repeat" description="HEAT 8">
    <location>
        <begin position="375"/>
        <end position="409"/>
    </location>
</feature>
<feature type="repeat" description="HEAT 9">
    <location>
        <begin position="431"/>
        <end position="468"/>
    </location>
</feature>
<feature type="repeat" description="HEAT 10">
    <location>
        <begin position="497"/>
        <end position="535"/>
    </location>
</feature>
<feature type="repeat" description="HEAT 11">
    <location>
        <begin position="548"/>
        <end position="585"/>
    </location>
</feature>
<feature type="region of interest" description="Disordered" evidence="5">
    <location>
        <begin position="629"/>
        <end position="696"/>
    </location>
</feature>
<feature type="region of interest" description="Disordered" evidence="5">
    <location>
        <begin position="726"/>
        <end position="920"/>
    </location>
</feature>
<feature type="coiled-coil region" evidence="4">
    <location>
        <begin position="659"/>
        <end position="679"/>
    </location>
</feature>
<feature type="coiled-coil region" evidence="4">
    <location>
        <begin position="725"/>
        <end position="756"/>
    </location>
</feature>
<feature type="coiled-coil region" evidence="4">
    <location>
        <begin position="845"/>
        <end position="869"/>
    </location>
</feature>
<feature type="compositionally biased region" description="Basic and acidic residues" evidence="5">
    <location>
        <begin position="639"/>
        <end position="675"/>
    </location>
</feature>
<feature type="compositionally biased region" description="Basic and acidic residues" evidence="5">
    <location>
        <begin position="726"/>
        <end position="740"/>
    </location>
</feature>
<feature type="compositionally biased region" description="Basic residues" evidence="5">
    <location>
        <begin position="741"/>
        <end position="758"/>
    </location>
</feature>
<feature type="compositionally biased region" description="Acidic residues" evidence="5">
    <location>
        <begin position="777"/>
        <end position="794"/>
    </location>
</feature>
<feature type="compositionally biased region" description="Basic and acidic residues" evidence="5">
    <location>
        <begin position="795"/>
        <end position="839"/>
    </location>
</feature>
<feature type="compositionally biased region" description="Basic residues" evidence="5">
    <location>
        <begin position="840"/>
        <end position="853"/>
    </location>
</feature>
<feature type="compositionally biased region" description="Basic residues" evidence="5">
    <location>
        <begin position="863"/>
        <end position="879"/>
    </location>
</feature>
<feature type="modified residue" description="N-acetylalanine" evidence="18">
    <location>
        <position position="2"/>
    </location>
</feature>
<feature type="modified residue" description="Phosphoserine" evidence="14 16 17 20">
    <location>
        <position position="632"/>
    </location>
</feature>
<feature type="modified residue" description="Phosphoserine" evidence="14 16 20">
    <location>
        <position position="634"/>
    </location>
</feature>
<feature type="modified residue" description="Phosphoserine" evidence="14 16 20">
    <location>
        <position position="636"/>
    </location>
</feature>
<feature type="modified residue" description="Phosphoserine" evidence="14 17 19">
    <location>
        <position position="658"/>
    </location>
</feature>
<feature type="modified residue" description="Phosphoserine" evidence="15">
    <location>
        <position position="688"/>
    </location>
</feature>
<feature type="modified residue" description="Phosphoserine" evidence="15">
    <location>
        <position position="758"/>
    </location>
</feature>
<feature type="modified residue" description="Phosphoserine" evidence="15">
    <location>
        <position position="759"/>
    </location>
</feature>
<feature type="modified residue" description="Phosphothreonine" evidence="15">
    <location>
        <position position="762"/>
    </location>
</feature>
<feature type="modified residue" description="Phosphoserine" evidence="15">
    <location>
        <position position="764"/>
    </location>
</feature>
<feature type="modified residue" description="Phosphoserine" evidence="15 16 20">
    <location>
        <position position="788"/>
    </location>
</feature>
<feature type="modified residue" description="Phosphoserine" evidence="16 19">
    <location>
        <position position="829"/>
    </location>
</feature>
<feature type="splice variant" id="VSP_000167" description="In isoform 3." evidence="11">
    <location>
        <begin position="117"/>
        <end position="285"/>
    </location>
</feature>
<feature type="splice variant" id="VSP_000165" description="In isoform 2." evidence="10 11">
    <location>
        <begin position="168"/>
        <end position="258"/>
    </location>
</feature>
<feature type="splice variant" id="VSP_000168" description="In isoform 4." evidence="11">
    <location>
        <begin position="746"/>
        <end position="877"/>
    </location>
</feature>
<feature type="splice variant" id="VSP_000166" description="In isoform 2." evidence="10 11">
    <original>K</original>
    <variation>KKAEDLDFWLSTTPPPAPAPAPAPVPSTDECEDAKTEAQGEEDDAEGQDQD</variation>
    <location>
        <position position="866"/>
    </location>
</feature>
<feature type="splice variant" id="VSP_017106" description="In isoform 5." evidence="12">
    <original>K</original>
    <variation>KKAEDLDFWLSTTPPPAPAPAPAPVPSTGELSVNTVTTPKDECEDAKTEAQGEEDDAEGQDQD</variation>
    <location>
        <position position="866"/>
    </location>
</feature>
<feature type="sequence variant" id="VAR_033517" description="In dbSNP:rs34569645.">
    <original>G</original>
    <variation>R</variation>
    <location>
        <position position="541"/>
    </location>
</feature>
<feature type="sequence variant" id="VAR_033518" description="In dbSNP:rs25673.">
    <original>I</original>
    <variation>V</variation>
    <location>
        <position position="1072"/>
    </location>
</feature>
<feature type="sequence conflict" description="In Ref. 2; AAD03777." evidence="13" ref="2">
    <original>L</original>
    <variation>F</variation>
    <location>
        <position position="3"/>
    </location>
</feature>
<feature type="sequence conflict" description="In Ref. 4; AAC34214." evidence="13" ref="4">
    <location>
        <position position="167"/>
    </location>
</feature>
<feature type="sequence conflict" description="In Ref. 5; AAH10065." evidence="13" ref="5">
    <original>E</original>
    <variation>G</variation>
    <location>
        <position position="252"/>
    </location>
</feature>
<feature type="sequence conflict" description="In Ref. 6; AAG35473." evidence="13" ref="6">
    <original>EVSALFAGE</original>
    <variation>DFVHCCYEL</variation>
    <location>
        <begin position="595"/>
        <end position="603"/>
    </location>
</feature>
<feature type="strand" evidence="21">
    <location>
        <begin position="704"/>
        <end position="706"/>
    </location>
</feature>
<feature type="strand" evidence="21">
    <location>
        <begin position="722"/>
        <end position="728"/>
    </location>
</feature>
<feature type="modified residue" description="Phosphoserine" evidence="20">
    <location sequence="O14617-2">
        <position position="785"/>
    </location>
</feature>
<feature type="modified residue" description="Phosphoserine" evidence="15">
    <location sequence="O14617-2">
        <position position="828"/>
    </location>
</feature>
<feature type="modified residue" description="Phosphoserine" evidence="15">
    <location sequence="O14617-5">
        <position position="931"/>
    </location>
</feature>
<protein>
    <recommendedName>
        <fullName>AP-3 complex subunit delta-1</fullName>
    </recommendedName>
    <alternativeName>
        <fullName>AP-3 complex subunit delta</fullName>
    </alternativeName>
    <alternativeName>
        <fullName>Adaptor-related protein complex 3 subunit delta-1</fullName>
    </alternativeName>
    <alternativeName>
        <fullName>Delta-adaptin</fullName>
    </alternativeName>
</protein>
<name>AP3D1_HUMAN</name>
<keyword id="KW-0002">3D-structure</keyword>
<keyword id="KW-0007">Acetylation</keyword>
<keyword id="KW-0015">Albinism</keyword>
<keyword id="KW-0025">Alternative splicing</keyword>
<keyword id="KW-0175">Coiled coil</keyword>
<keyword id="KW-0963">Cytoplasm</keyword>
<keyword id="KW-0333">Golgi apparatus</keyword>
<keyword id="KW-0363">Hermansky-Pudlak syndrome</keyword>
<keyword id="KW-0472">Membrane</keyword>
<keyword id="KW-0597">Phosphoprotein</keyword>
<keyword id="KW-0653">Protein transport</keyword>
<keyword id="KW-1267">Proteomics identification</keyword>
<keyword id="KW-1185">Reference proteome</keyword>
<keyword id="KW-0677">Repeat</keyword>
<keyword id="KW-0813">Transport</keyword>
<gene>
    <name type="primary">AP3D1</name>
    <name type="ORF">PRO0039</name>
</gene>
<organism>
    <name type="scientific">Homo sapiens</name>
    <name type="common">Human</name>
    <dbReference type="NCBI Taxonomy" id="9606"/>
    <lineage>
        <taxon>Eukaryota</taxon>
        <taxon>Metazoa</taxon>
        <taxon>Chordata</taxon>
        <taxon>Craniata</taxon>
        <taxon>Vertebrata</taxon>
        <taxon>Euteleostomi</taxon>
        <taxon>Mammalia</taxon>
        <taxon>Eutheria</taxon>
        <taxon>Euarchontoglires</taxon>
        <taxon>Primates</taxon>
        <taxon>Haplorrhini</taxon>
        <taxon>Catarrhini</taxon>
        <taxon>Hominidae</taxon>
        <taxon>Homo</taxon>
    </lineage>
</organism>
<evidence type="ECO:0000250" key="1"/>
<evidence type="ECO:0000250" key="2">
    <source>
        <dbReference type="UniProtKB" id="O54774"/>
    </source>
</evidence>
<evidence type="ECO:0000250" key="3">
    <source>
        <dbReference type="UniProtKB" id="Q865S1"/>
    </source>
</evidence>
<evidence type="ECO:0000255" key="4"/>
<evidence type="ECO:0000256" key="5">
    <source>
        <dbReference type="SAM" id="MobiDB-lite"/>
    </source>
</evidence>
<evidence type="ECO:0000269" key="6">
    <source>
    </source>
</evidence>
<evidence type="ECO:0000269" key="7">
    <source>
    </source>
</evidence>
<evidence type="ECO:0000269" key="8">
    <source>
    </source>
</evidence>
<evidence type="ECO:0000269" key="9">
    <source>
    </source>
</evidence>
<evidence type="ECO:0000303" key="10">
    <source>
    </source>
</evidence>
<evidence type="ECO:0000303" key="11">
    <source>
    </source>
</evidence>
<evidence type="ECO:0000303" key="12">
    <source ref="3"/>
</evidence>
<evidence type="ECO:0000305" key="13"/>
<evidence type="ECO:0007744" key="14">
    <source>
    </source>
</evidence>
<evidence type="ECO:0007744" key="15">
    <source>
    </source>
</evidence>
<evidence type="ECO:0007744" key="16">
    <source>
    </source>
</evidence>
<evidence type="ECO:0007744" key="17">
    <source>
    </source>
</evidence>
<evidence type="ECO:0007744" key="18">
    <source>
    </source>
</evidence>
<evidence type="ECO:0007744" key="19">
    <source>
    </source>
</evidence>
<evidence type="ECO:0007744" key="20">
    <source>
    </source>
</evidence>
<evidence type="ECO:0007829" key="21">
    <source>
        <dbReference type="PDB" id="4AFI"/>
    </source>
</evidence>
<accession>O14617</accession>
<accession>O00202</accession>
<accession>O75262</accession>
<accession>Q59HF5</accession>
<accession>Q96G11</accession>
<accession>Q9H3C6</accession>
<comment type="function">
    <text evidence="2 8">Part of the AP-3 complex, an adaptor-related complex which is not clathrin-associated. The complex is associated with the Golgi region as well as more peripheral structures. It facilitates the budding of vesicles from the Golgi membrane and may be directly involved in trafficking to lysosomes. Involved in process of CD8+ T-cell and NK cell degranulation (PubMed:26744459). In concert with the BLOC-1 complex, AP-3 is required to target cargos into vesicles assembled at cell bodies for delivery into neurites and nerve terminals (By similarity).</text>
</comment>
<comment type="subunit">
    <text evidence="3 6 7">AP-3 associates with the BLOC-1 complex (By similarity). Adaptor protein complex 3 (AP-3) is a heterotetramer composed of two large adaptins (delta-type subunit AP3D1 and beta-type subunit AP3B1 or AP3B2), a medium adaptin (mu-type subunit AP3M1 or AP3M2) and a small adaptin (sigma-type subunit APS1 or AP3S2) (By similarity). Interacts with SLC30A2 (PubMed:25808614). Interacts with CLN3 (via dileucine motif); this interaction facilitates lysosomal targeting (PubMed:15598649).</text>
</comment>
<comment type="subcellular location">
    <subcellularLocation>
        <location evidence="1">Cytoplasm</location>
    </subcellularLocation>
    <subcellularLocation>
        <location evidence="1">Golgi apparatus membrane</location>
        <topology evidence="1">Peripheral membrane protein</topology>
        <orientation evidence="1">Cytoplasmic side</orientation>
    </subcellularLocation>
</comment>
<comment type="alternative products">
    <event type="alternative splicing"/>
    <isoform>
        <id>O14617-1</id>
        <name>1</name>
        <sequence type="displayed"/>
    </isoform>
    <isoform>
        <id>O14617-2</id>
        <name>2</name>
        <sequence type="described" ref="VSP_000165 VSP_000166"/>
    </isoform>
    <isoform>
        <id>O14617-3</id>
        <name>3</name>
        <sequence type="described" ref="VSP_000167"/>
    </isoform>
    <isoform>
        <id>O14617-4</id>
        <name>4</name>
        <sequence type="described" ref="VSP_000168"/>
    </isoform>
    <isoform>
        <id>O14617-5</id>
        <name>5</name>
        <sequence type="described" ref="VSP_017106"/>
    </isoform>
</comment>
<comment type="tissue specificity">
    <text evidence="9">Present in all adult tissues examined with the highest levels in skeletal muscle, heart, pancreas and testis.</text>
</comment>
<comment type="disease" evidence="8">
    <disease id="DI-04775">
        <name>Hermansky-Pudlak syndrome 10</name>
        <acronym>HPS10</acronym>
        <description>A form of Hermansky-Pudlak syndrome, a genetically heterogeneous autosomal recessive disorder characterized by oculocutaneous albinism, bleeding due to platelet storage pool deficiency, and lysosomal storage defects. This syndrome results from defects of diverse cytoplasmic organelles including melanosomes, platelet dense granules and lysosomes. Ceroid storage in the lungs is associated with pulmonary fibrosis, a common cause of premature death in individuals with HPS. HPS10 patients manifest albinism, neutropenia, immunodeficiency, neurodevelopmental delay, generalized seizures, and impaired hearing.</description>
        <dbReference type="MIM" id="617050"/>
    </disease>
    <text>The disease is caused by variants affecting the gene represented in this entry.</text>
</comment>
<comment type="similarity">
    <text evidence="13">Belongs to the adaptor complexes large subunit family.</text>
</comment>
<comment type="sequence caution" evidence="13">
    <conflict type="miscellaneous discrepancy">
        <sequence resource="EMBL-CDS" id="AAG35473"/>
    </conflict>
    <text>Contaminating sequence. Presence of an unrelated sequence found on chromosome 7.</text>
</comment>
<comment type="sequence caution" evidence="13">
    <conflict type="miscellaneous discrepancy">
        <sequence resource="EMBL-CDS" id="AAH10065"/>
    </conflict>
    <text>Lack of 8 exons and truncation of 2 other exons in the C- terminus. Alternative splicing seems doubtful, since exon-intron junctions are not the consensus ones.</text>
</comment>
<comment type="sequence caution" evidence="13">
    <conflict type="erroneous initiation">
        <sequence resource="EMBL-CDS" id="BAD92041"/>
    </conflict>
    <text>Extended N-terminus.</text>
</comment>